<accession>Q7VXK3</accession>
<comment type="function">
    <text evidence="1">Catalyzes the attachment of isoleucine to tRNA(Ile). As IleRS can inadvertently accommodate and process structurally similar amino acids such as valine, to avoid such errors it has two additional distinct tRNA(Ile)-dependent editing activities. One activity is designated as 'pretransfer' editing and involves the hydrolysis of activated Val-AMP. The other activity is designated 'posttransfer' editing and involves deacylation of mischarged Val-tRNA(Ile).</text>
</comment>
<comment type="catalytic activity">
    <reaction evidence="1">
        <text>tRNA(Ile) + L-isoleucine + ATP = L-isoleucyl-tRNA(Ile) + AMP + diphosphate</text>
        <dbReference type="Rhea" id="RHEA:11060"/>
        <dbReference type="Rhea" id="RHEA-COMP:9666"/>
        <dbReference type="Rhea" id="RHEA-COMP:9695"/>
        <dbReference type="ChEBI" id="CHEBI:30616"/>
        <dbReference type="ChEBI" id="CHEBI:33019"/>
        <dbReference type="ChEBI" id="CHEBI:58045"/>
        <dbReference type="ChEBI" id="CHEBI:78442"/>
        <dbReference type="ChEBI" id="CHEBI:78528"/>
        <dbReference type="ChEBI" id="CHEBI:456215"/>
        <dbReference type="EC" id="6.1.1.5"/>
    </reaction>
</comment>
<comment type="cofactor">
    <cofactor evidence="1">
        <name>Zn(2+)</name>
        <dbReference type="ChEBI" id="CHEBI:29105"/>
    </cofactor>
    <text evidence="1">Binds 1 zinc ion per subunit.</text>
</comment>
<comment type="subunit">
    <text evidence="1">Monomer.</text>
</comment>
<comment type="subcellular location">
    <subcellularLocation>
        <location evidence="1">Cytoplasm</location>
    </subcellularLocation>
</comment>
<comment type="domain">
    <text evidence="1">IleRS has two distinct active sites: one for aminoacylation and one for editing. The misactivated valine is translocated from the active site to the editing site, which sterically excludes the correctly activated isoleucine. The single editing site contains two valyl binding pockets, one specific for each substrate (Val-AMP or Val-tRNA(Ile)).</text>
</comment>
<comment type="similarity">
    <text evidence="1">Belongs to the class-I aminoacyl-tRNA synthetase family. IleS type 1 subfamily.</text>
</comment>
<evidence type="ECO:0000255" key="1">
    <source>
        <dbReference type="HAMAP-Rule" id="MF_02002"/>
    </source>
</evidence>
<name>SYI_BORPE</name>
<dbReference type="EC" id="6.1.1.5" evidence="1"/>
<dbReference type="EMBL" id="BX640416">
    <property type="protein sequence ID" value="CAE42039.1"/>
    <property type="molecule type" value="Genomic_DNA"/>
</dbReference>
<dbReference type="RefSeq" id="NP_880465.1">
    <property type="nucleotide sequence ID" value="NC_002929.2"/>
</dbReference>
<dbReference type="RefSeq" id="WP_010930542.1">
    <property type="nucleotide sequence ID" value="NZ_CP039022.1"/>
</dbReference>
<dbReference type="SMR" id="Q7VXK3"/>
<dbReference type="STRING" id="257313.BP1753"/>
<dbReference type="PaxDb" id="257313-BP1753"/>
<dbReference type="GeneID" id="69602070"/>
<dbReference type="KEGG" id="bpe:BP1753"/>
<dbReference type="PATRIC" id="fig|257313.5.peg.1882"/>
<dbReference type="eggNOG" id="COG0060">
    <property type="taxonomic scope" value="Bacteria"/>
</dbReference>
<dbReference type="HOGENOM" id="CLU_001493_7_1_4"/>
<dbReference type="Proteomes" id="UP000002676">
    <property type="component" value="Chromosome"/>
</dbReference>
<dbReference type="GO" id="GO:0005829">
    <property type="term" value="C:cytosol"/>
    <property type="evidence" value="ECO:0007669"/>
    <property type="project" value="TreeGrafter"/>
</dbReference>
<dbReference type="GO" id="GO:0002161">
    <property type="term" value="F:aminoacyl-tRNA deacylase activity"/>
    <property type="evidence" value="ECO:0007669"/>
    <property type="project" value="InterPro"/>
</dbReference>
<dbReference type="GO" id="GO:0005524">
    <property type="term" value="F:ATP binding"/>
    <property type="evidence" value="ECO:0007669"/>
    <property type="project" value="UniProtKB-UniRule"/>
</dbReference>
<dbReference type="GO" id="GO:0004822">
    <property type="term" value="F:isoleucine-tRNA ligase activity"/>
    <property type="evidence" value="ECO:0007669"/>
    <property type="project" value="UniProtKB-UniRule"/>
</dbReference>
<dbReference type="GO" id="GO:0000049">
    <property type="term" value="F:tRNA binding"/>
    <property type="evidence" value="ECO:0007669"/>
    <property type="project" value="InterPro"/>
</dbReference>
<dbReference type="GO" id="GO:0008270">
    <property type="term" value="F:zinc ion binding"/>
    <property type="evidence" value="ECO:0007669"/>
    <property type="project" value="UniProtKB-UniRule"/>
</dbReference>
<dbReference type="GO" id="GO:0006428">
    <property type="term" value="P:isoleucyl-tRNA aminoacylation"/>
    <property type="evidence" value="ECO:0007669"/>
    <property type="project" value="UniProtKB-UniRule"/>
</dbReference>
<dbReference type="CDD" id="cd07960">
    <property type="entry name" value="Anticodon_Ia_Ile_BEm"/>
    <property type="match status" value="1"/>
</dbReference>
<dbReference type="CDD" id="cd00818">
    <property type="entry name" value="IleRS_core"/>
    <property type="match status" value="1"/>
</dbReference>
<dbReference type="FunFam" id="3.40.50.620:FF:000042">
    <property type="entry name" value="Isoleucine--tRNA ligase"/>
    <property type="match status" value="1"/>
</dbReference>
<dbReference type="FunFam" id="3.40.50.620:FF:000048">
    <property type="entry name" value="Isoleucine--tRNA ligase"/>
    <property type="match status" value="1"/>
</dbReference>
<dbReference type="Gene3D" id="1.10.730.20">
    <property type="match status" value="1"/>
</dbReference>
<dbReference type="Gene3D" id="3.40.50.620">
    <property type="entry name" value="HUPs"/>
    <property type="match status" value="2"/>
</dbReference>
<dbReference type="Gene3D" id="3.90.740.10">
    <property type="entry name" value="Valyl/Leucyl/Isoleucyl-tRNA synthetase, editing domain"/>
    <property type="match status" value="1"/>
</dbReference>
<dbReference type="HAMAP" id="MF_02002">
    <property type="entry name" value="Ile_tRNA_synth_type1"/>
    <property type="match status" value="1"/>
</dbReference>
<dbReference type="InterPro" id="IPR001412">
    <property type="entry name" value="aa-tRNA-synth_I_CS"/>
</dbReference>
<dbReference type="InterPro" id="IPR002300">
    <property type="entry name" value="aa-tRNA-synth_Ia"/>
</dbReference>
<dbReference type="InterPro" id="IPR033708">
    <property type="entry name" value="Anticodon_Ile_BEm"/>
</dbReference>
<dbReference type="InterPro" id="IPR002301">
    <property type="entry name" value="Ile-tRNA-ligase"/>
</dbReference>
<dbReference type="InterPro" id="IPR023585">
    <property type="entry name" value="Ile-tRNA-ligase_type1"/>
</dbReference>
<dbReference type="InterPro" id="IPR050081">
    <property type="entry name" value="Ile-tRNA_ligase"/>
</dbReference>
<dbReference type="InterPro" id="IPR013155">
    <property type="entry name" value="M/V/L/I-tRNA-synth_anticd-bd"/>
</dbReference>
<dbReference type="InterPro" id="IPR014729">
    <property type="entry name" value="Rossmann-like_a/b/a_fold"/>
</dbReference>
<dbReference type="InterPro" id="IPR009080">
    <property type="entry name" value="tRNAsynth_Ia_anticodon-bd"/>
</dbReference>
<dbReference type="InterPro" id="IPR009008">
    <property type="entry name" value="Val/Leu/Ile-tRNA-synth_edit"/>
</dbReference>
<dbReference type="InterPro" id="IPR010663">
    <property type="entry name" value="Znf_FPG/IleRS"/>
</dbReference>
<dbReference type="NCBIfam" id="TIGR00392">
    <property type="entry name" value="ileS"/>
    <property type="match status" value="1"/>
</dbReference>
<dbReference type="PANTHER" id="PTHR42765:SF1">
    <property type="entry name" value="ISOLEUCINE--TRNA LIGASE, MITOCHONDRIAL"/>
    <property type="match status" value="1"/>
</dbReference>
<dbReference type="PANTHER" id="PTHR42765">
    <property type="entry name" value="SOLEUCYL-TRNA SYNTHETASE"/>
    <property type="match status" value="1"/>
</dbReference>
<dbReference type="Pfam" id="PF08264">
    <property type="entry name" value="Anticodon_1"/>
    <property type="match status" value="1"/>
</dbReference>
<dbReference type="Pfam" id="PF00133">
    <property type="entry name" value="tRNA-synt_1"/>
    <property type="match status" value="1"/>
</dbReference>
<dbReference type="Pfam" id="PF06827">
    <property type="entry name" value="zf-FPG_IleRS"/>
    <property type="match status" value="1"/>
</dbReference>
<dbReference type="PRINTS" id="PR00984">
    <property type="entry name" value="TRNASYNTHILE"/>
</dbReference>
<dbReference type="SUPFAM" id="SSF47323">
    <property type="entry name" value="Anticodon-binding domain of a subclass of class I aminoacyl-tRNA synthetases"/>
    <property type="match status" value="1"/>
</dbReference>
<dbReference type="SUPFAM" id="SSF52374">
    <property type="entry name" value="Nucleotidylyl transferase"/>
    <property type="match status" value="1"/>
</dbReference>
<dbReference type="SUPFAM" id="SSF50677">
    <property type="entry name" value="ValRS/IleRS/LeuRS editing domain"/>
    <property type="match status" value="1"/>
</dbReference>
<dbReference type="PROSITE" id="PS00178">
    <property type="entry name" value="AA_TRNA_LIGASE_I"/>
    <property type="match status" value="1"/>
</dbReference>
<organism>
    <name type="scientific">Bordetella pertussis (strain Tohama I / ATCC BAA-589 / NCTC 13251)</name>
    <dbReference type="NCBI Taxonomy" id="257313"/>
    <lineage>
        <taxon>Bacteria</taxon>
        <taxon>Pseudomonadati</taxon>
        <taxon>Pseudomonadota</taxon>
        <taxon>Betaproteobacteria</taxon>
        <taxon>Burkholderiales</taxon>
        <taxon>Alcaligenaceae</taxon>
        <taxon>Bordetella</taxon>
    </lineage>
</organism>
<proteinExistence type="inferred from homology"/>
<keyword id="KW-0030">Aminoacyl-tRNA synthetase</keyword>
<keyword id="KW-0067">ATP-binding</keyword>
<keyword id="KW-0963">Cytoplasm</keyword>
<keyword id="KW-0436">Ligase</keyword>
<keyword id="KW-0479">Metal-binding</keyword>
<keyword id="KW-0547">Nucleotide-binding</keyword>
<keyword id="KW-0648">Protein biosynthesis</keyword>
<keyword id="KW-1185">Reference proteome</keyword>
<keyword id="KW-0862">Zinc</keyword>
<feature type="chain" id="PRO_0000098359" description="Isoleucine--tRNA ligase">
    <location>
        <begin position="1"/>
        <end position="953"/>
    </location>
</feature>
<feature type="short sequence motif" description="'HIGH' region">
    <location>
        <begin position="57"/>
        <end position="67"/>
    </location>
</feature>
<feature type="short sequence motif" description="'KMSKS' region">
    <location>
        <begin position="623"/>
        <end position="627"/>
    </location>
</feature>
<feature type="binding site" evidence="1">
    <location>
        <position position="582"/>
    </location>
    <ligand>
        <name>L-isoleucyl-5'-AMP</name>
        <dbReference type="ChEBI" id="CHEBI:178002"/>
    </ligand>
</feature>
<feature type="binding site" evidence="1">
    <location>
        <position position="626"/>
    </location>
    <ligand>
        <name>ATP</name>
        <dbReference type="ChEBI" id="CHEBI:30616"/>
    </ligand>
</feature>
<feature type="binding site" evidence="1">
    <location>
        <position position="916"/>
    </location>
    <ligand>
        <name>Zn(2+)</name>
        <dbReference type="ChEBI" id="CHEBI:29105"/>
    </ligand>
</feature>
<feature type="binding site" evidence="1">
    <location>
        <position position="919"/>
    </location>
    <ligand>
        <name>Zn(2+)</name>
        <dbReference type="ChEBI" id="CHEBI:29105"/>
    </ligand>
</feature>
<feature type="binding site" evidence="1">
    <location>
        <position position="936"/>
    </location>
    <ligand>
        <name>Zn(2+)</name>
        <dbReference type="ChEBI" id="CHEBI:29105"/>
    </ligand>
</feature>
<feature type="binding site" evidence="1">
    <location>
        <position position="939"/>
    </location>
    <ligand>
        <name>Zn(2+)</name>
        <dbReference type="ChEBI" id="CHEBI:29105"/>
    </ligand>
</feature>
<sequence>MDYKKSLNLPDTPFPMRGDLAKREPGWVAEWEETQVYQAIRAASRGRPRFVLHDGPPYANGDIHIGHAVNKILKDIIVKSRNMAGYDAHYVPGWDCHGMPIEIQIEKKYGKHLPVTEVQSKARAYALEQIDRQRKDFKRLGVLGDWHNPYLTMNFSNEADEIRVLGRILEKGYVFRGLKPVNWCFDCGSALAEAEVEYADRVDPAIDVAFPFTDRGALARAFGLDEVDAGAIVIWTTTPWTIPSNQALNVHPEIDYALVRVTPAPVHGPLLLLAQERVEPSLKAWGLEGEIIATAKGEALEGLRFRHPLAAAAQGYDRTSPIYLGDYVTLDTGTGVVHSAPAYGIEDFVSCKAHGLADSDILGPVMGDGKFVDSLPLFGGLSIWDANPRIVEALKLADSLMLVQKLSHSYMHCWRHKTPVIYRATSQWFAGMDVKPRDGGPSLRESALAGIDATAFYPAWGRARLHAMIANRPDWTLSRQRQWGVPMAFFVHKETGELHPRTVELLEQIAQRVEKGGIEAWQSLDPRELLGDEAELYEKNRDTLDVWFDSGSTHATVLGGKDGVLGGSHGAELAWPADLYLEGSDQHRGWFHSSLLTGCMLYGHPPYKGLLTHGFVVDGQGRKMSKSVGNVIAPQKVSDSLGAEILRLWVASTDYSGELSISDEILKRVVESYRRIRNTLRFLLANVADFDAVGQAVPYGELFEIDRYALAMTAQMQAEVQGHYERYDFHPAVSRLQTFCSEDLGAFYLDILKDRLYTTAAGSAARRSAQTALLDITQTLLKLMAPILSFTAEEAWKILAGSALAKQADAPRVTIFTEVYHALPPFADGEALTAKWTRLRAIRAEVQRKLEEVRSAGAIGSSLQAEVDLYANAADHDILASLGDDLRFVLIVSRATVHADADDLRIEIAASGHKKCERCWHWRPDVGQDADHPEICGRCVSNLFGAGEPRTRA</sequence>
<reference key="1">
    <citation type="journal article" date="2003" name="Nat. Genet.">
        <title>Comparative analysis of the genome sequences of Bordetella pertussis, Bordetella parapertussis and Bordetella bronchiseptica.</title>
        <authorList>
            <person name="Parkhill J."/>
            <person name="Sebaihia M."/>
            <person name="Preston A."/>
            <person name="Murphy L.D."/>
            <person name="Thomson N.R."/>
            <person name="Harris D.E."/>
            <person name="Holden M.T.G."/>
            <person name="Churcher C.M."/>
            <person name="Bentley S.D."/>
            <person name="Mungall K.L."/>
            <person name="Cerdeno-Tarraga A.-M."/>
            <person name="Temple L."/>
            <person name="James K.D."/>
            <person name="Harris B."/>
            <person name="Quail M.A."/>
            <person name="Achtman M."/>
            <person name="Atkin R."/>
            <person name="Baker S."/>
            <person name="Basham D."/>
            <person name="Bason N."/>
            <person name="Cherevach I."/>
            <person name="Chillingworth T."/>
            <person name="Collins M."/>
            <person name="Cronin A."/>
            <person name="Davis P."/>
            <person name="Doggett J."/>
            <person name="Feltwell T."/>
            <person name="Goble A."/>
            <person name="Hamlin N."/>
            <person name="Hauser H."/>
            <person name="Holroyd S."/>
            <person name="Jagels K."/>
            <person name="Leather S."/>
            <person name="Moule S."/>
            <person name="Norberczak H."/>
            <person name="O'Neil S."/>
            <person name="Ormond D."/>
            <person name="Price C."/>
            <person name="Rabbinowitsch E."/>
            <person name="Rutter S."/>
            <person name="Sanders M."/>
            <person name="Saunders D."/>
            <person name="Seeger K."/>
            <person name="Sharp S."/>
            <person name="Simmonds M."/>
            <person name="Skelton J."/>
            <person name="Squares R."/>
            <person name="Squares S."/>
            <person name="Stevens K."/>
            <person name="Unwin L."/>
            <person name="Whitehead S."/>
            <person name="Barrell B.G."/>
            <person name="Maskell D.J."/>
        </authorList>
    </citation>
    <scope>NUCLEOTIDE SEQUENCE [LARGE SCALE GENOMIC DNA]</scope>
    <source>
        <strain>Tohama I / ATCC BAA-589 / NCTC 13251</strain>
    </source>
</reference>
<gene>
    <name evidence="1" type="primary">ileS</name>
    <name type="ordered locus">BP1753</name>
</gene>
<protein>
    <recommendedName>
        <fullName evidence="1">Isoleucine--tRNA ligase</fullName>
        <ecNumber evidence="1">6.1.1.5</ecNumber>
    </recommendedName>
    <alternativeName>
        <fullName evidence="1">Isoleucyl-tRNA synthetase</fullName>
        <shortName evidence="1">IleRS</shortName>
    </alternativeName>
</protein>